<proteinExistence type="inferred from homology"/>
<gene>
    <name evidence="1" type="primary">htpG</name>
    <name type="ordered locus">BMA10229_A0859</name>
</gene>
<organism>
    <name type="scientific">Burkholderia mallei (strain NCTC 10229)</name>
    <dbReference type="NCBI Taxonomy" id="412022"/>
    <lineage>
        <taxon>Bacteria</taxon>
        <taxon>Pseudomonadati</taxon>
        <taxon>Pseudomonadota</taxon>
        <taxon>Betaproteobacteria</taxon>
        <taxon>Burkholderiales</taxon>
        <taxon>Burkholderiaceae</taxon>
        <taxon>Burkholderia</taxon>
        <taxon>pseudomallei group</taxon>
    </lineage>
</organism>
<evidence type="ECO:0000255" key="1">
    <source>
        <dbReference type="HAMAP-Rule" id="MF_00505"/>
    </source>
</evidence>
<feature type="chain" id="PRO_1000014902" description="Chaperone protein HtpG">
    <location>
        <begin position="1"/>
        <end position="632"/>
    </location>
</feature>
<feature type="region of interest" description="A; substrate-binding" evidence="1">
    <location>
        <begin position="1"/>
        <end position="339"/>
    </location>
</feature>
<feature type="region of interest" description="B" evidence="1">
    <location>
        <begin position="340"/>
        <end position="559"/>
    </location>
</feature>
<feature type="region of interest" description="C" evidence="1">
    <location>
        <begin position="560"/>
        <end position="632"/>
    </location>
</feature>
<keyword id="KW-0067">ATP-binding</keyword>
<keyword id="KW-0143">Chaperone</keyword>
<keyword id="KW-0963">Cytoplasm</keyword>
<keyword id="KW-0547">Nucleotide-binding</keyword>
<keyword id="KW-0346">Stress response</keyword>
<name>HTPG_BURM9</name>
<reference key="1">
    <citation type="journal article" date="2010" name="Genome Biol. Evol.">
        <title>Continuing evolution of Burkholderia mallei through genome reduction and large-scale rearrangements.</title>
        <authorList>
            <person name="Losada L."/>
            <person name="Ronning C.M."/>
            <person name="DeShazer D."/>
            <person name="Woods D."/>
            <person name="Fedorova N."/>
            <person name="Kim H.S."/>
            <person name="Shabalina S.A."/>
            <person name="Pearson T.R."/>
            <person name="Brinkac L."/>
            <person name="Tan P."/>
            <person name="Nandi T."/>
            <person name="Crabtree J."/>
            <person name="Badger J."/>
            <person name="Beckstrom-Sternberg S."/>
            <person name="Saqib M."/>
            <person name="Schutzer S.E."/>
            <person name="Keim P."/>
            <person name="Nierman W.C."/>
        </authorList>
    </citation>
    <scope>NUCLEOTIDE SEQUENCE [LARGE SCALE GENOMIC DNA]</scope>
    <source>
        <strain>NCTC 10229</strain>
    </source>
</reference>
<dbReference type="EMBL" id="CP000546">
    <property type="protein sequence ID" value="ABN02715.1"/>
    <property type="molecule type" value="Genomic_DNA"/>
</dbReference>
<dbReference type="RefSeq" id="WP_004185742.1">
    <property type="nucleotide sequence ID" value="NC_008836.1"/>
</dbReference>
<dbReference type="SMR" id="A2S4I0"/>
<dbReference type="GeneID" id="93059584"/>
<dbReference type="KEGG" id="bml:BMA10229_A0859"/>
<dbReference type="HOGENOM" id="CLU_006684_3_0_4"/>
<dbReference type="Proteomes" id="UP000002283">
    <property type="component" value="Chromosome I"/>
</dbReference>
<dbReference type="GO" id="GO:0005737">
    <property type="term" value="C:cytoplasm"/>
    <property type="evidence" value="ECO:0007669"/>
    <property type="project" value="UniProtKB-SubCell"/>
</dbReference>
<dbReference type="GO" id="GO:0005524">
    <property type="term" value="F:ATP binding"/>
    <property type="evidence" value="ECO:0007669"/>
    <property type="project" value="UniProtKB-UniRule"/>
</dbReference>
<dbReference type="GO" id="GO:0016887">
    <property type="term" value="F:ATP hydrolysis activity"/>
    <property type="evidence" value="ECO:0007669"/>
    <property type="project" value="InterPro"/>
</dbReference>
<dbReference type="GO" id="GO:0140662">
    <property type="term" value="F:ATP-dependent protein folding chaperone"/>
    <property type="evidence" value="ECO:0007669"/>
    <property type="project" value="InterPro"/>
</dbReference>
<dbReference type="GO" id="GO:0051082">
    <property type="term" value="F:unfolded protein binding"/>
    <property type="evidence" value="ECO:0007669"/>
    <property type="project" value="UniProtKB-UniRule"/>
</dbReference>
<dbReference type="CDD" id="cd16927">
    <property type="entry name" value="HATPase_Hsp90-like"/>
    <property type="match status" value="1"/>
</dbReference>
<dbReference type="FunFam" id="3.30.230.80:FF:000002">
    <property type="entry name" value="Molecular chaperone HtpG"/>
    <property type="match status" value="1"/>
</dbReference>
<dbReference type="FunFam" id="3.30.565.10:FF:000009">
    <property type="entry name" value="Molecular chaperone HtpG"/>
    <property type="match status" value="1"/>
</dbReference>
<dbReference type="Gene3D" id="3.30.230.80">
    <property type="match status" value="1"/>
</dbReference>
<dbReference type="Gene3D" id="3.40.50.11260">
    <property type="match status" value="1"/>
</dbReference>
<dbReference type="Gene3D" id="1.20.120.790">
    <property type="entry name" value="Heat shock protein 90, C-terminal domain"/>
    <property type="match status" value="1"/>
</dbReference>
<dbReference type="Gene3D" id="3.30.565.10">
    <property type="entry name" value="Histidine kinase-like ATPase, C-terminal domain"/>
    <property type="match status" value="1"/>
</dbReference>
<dbReference type="HAMAP" id="MF_00505">
    <property type="entry name" value="HSP90"/>
    <property type="match status" value="1"/>
</dbReference>
<dbReference type="InterPro" id="IPR036890">
    <property type="entry name" value="HATPase_C_sf"/>
</dbReference>
<dbReference type="InterPro" id="IPR019805">
    <property type="entry name" value="Heat_shock_protein_90_CS"/>
</dbReference>
<dbReference type="InterPro" id="IPR037196">
    <property type="entry name" value="HSP90_C"/>
</dbReference>
<dbReference type="InterPro" id="IPR001404">
    <property type="entry name" value="Hsp90_fam"/>
</dbReference>
<dbReference type="InterPro" id="IPR020575">
    <property type="entry name" value="Hsp90_N"/>
</dbReference>
<dbReference type="InterPro" id="IPR020568">
    <property type="entry name" value="Ribosomal_Su5_D2-typ_SF"/>
</dbReference>
<dbReference type="NCBIfam" id="NF003555">
    <property type="entry name" value="PRK05218.1"/>
    <property type="match status" value="1"/>
</dbReference>
<dbReference type="PANTHER" id="PTHR11528">
    <property type="entry name" value="HEAT SHOCK PROTEIN 90 FAMILY MEMBER"/>
    <property type="match status" value="1"/>
</dbReference>
<dbReference type="Pfam" id="PF13589">
    <property type="entry name" value="HATPase_c_3"/>
    <property type="match status" value="1"/>
</dbReference>
<dbReference type="Pfam" id="PF00183">
    <property type="entry name" value="HSP90"/>
    <property type="match status" value="1"/>
</dbReference>
<dbReference type="PIRSF" id="PIRSF002583">
    <property type="entry name" value="Hsp90"/>
    <property type="match status" value="1"/>
</dbReference>
<dbReference type="PRINTS" id="PR00775">
    <property type="entry name" value="HEATSHOCK90"/>
</dbReference>
<dbReference type="SMART" id="SM00387">
    <property type="entry name" value="HATPase_c"/>
    <property type="match status" value="1"/>
</dbReference>
<dbReference type="SUPFAM" id="SSF55874">
    <property type="entry name" value="ATPase domain of HSP90 chaperone/DNA topoisomerase II/histidine kinase"/>
    <property type="match status" value="1"/>
</dbReference>
<dbReference type="SUPFAM" id="SSF110942">
    <property type="entry name" value="HSP90 C-terminal domain"/>
    <property type="match status" value="1"/>
</dbReference>
<dbReference type="SUPFAM" id="SSF54211">
    <property type="entry name" value="Ribosomal protein S5 domain 2-like"/>
    <property type="match status" value="1"/>
</dbReference>
<dbReference type="PROSITE" id="PS00298">
    <property type="entry name" value="HSP90"/>
    <property type="match status" value="1"/>
</dbReference>
<comment type="function">
    <text evidence="1">Molecular chaperone. Has ATPase activity.</text>
</comment>
<comment type="subunit">
    <text evidence="1">Homodimer.</text>
</comment>
<comment type="subcellular location">
    <subcellularLocation>
        <location evidence="1">Cytoplasm</location>
    </subcellularLocation>
</comment>
<comment type="similarity">
    <text evidence="1">Belongs to the heat shock protein 90 family.</text>
</comment>
<sequence>MTQQTMSFQAEVKQLLHLMIHSLYSNKEIFLRELVSNASDAADKLRFEALENNALYESDPNLRIRLSFDKAARTITIDDNGIGMSRDEAIANLGTIARSGTKEFFSKLSGDQQKDAALIGQFGVGFYSGFIVADRITVETRRAGLPASEGVRWESAGEGDFQVDTIERAARGTTITLHLREGEDELLSSYRLKSIVQKYSDHVALPILMKKEEWDQEKGEMVEKDEDETINQASALWTRAKSEVTDEQYKQFYQHVAHDHQDPLAWTHNRVEGRSEYTQLLFVPSHAPFDLWNRDYRGGLKLYVKRVFIMDDAEQLLPQYLRFIKGVVDSSDLPLNVSREILQESRDVKAIREGVTKRALSMLEELANAEDDAGKEKYKTFWSAFGQVLKEGVGEDHANRERVAKLLRFASTHGDTDAQDVALADYVARMKPEQTKIYYVTADTWQAAKNSPHLEVFRKKGVEVLLLTDRVDEWMLSFLHEFDGKPLASVARGDLDLGALNDDEKKAQEETGEAMKPVVDKMKETLGEKVKDVRVTFRLTDSPSCLVADDNDMSGYLQRMLKAAGQSAPSFQPILEINPEHPLVKALKADGADFGDWCHLLFDQALLAEGGALEDPASFVKRTNALLLSRAA</sequence>
<accession>A2S4I0</accession>
<protein>
    <recommendedName>
        <fullName evidence="1">Chaperone protein HtpG</fullName>
    </recommendedName>
    <alternativeName>
        <fullName evidence="1">Heat shock protein HtpG</fullName>
    </alternativeName>
    <alternativeName>
        <fullName evidence="1">High temperature protein G</fullName>
    </alternativeName>
</protein>